<accession>Q9QXX4</accession>
<accession>Q9CZF6</accession>
<accession>Q9DCF5</accession>
<organism evidence="10">
    <name type="scientific">Mus musculus</name>
    <name type="common">Mouse</name>
    <dbReference type="NCBI Taxonomy" id="10090"/>
    <lineage>
        <taxon>Eukaryota</taxon>
        <taxon>Metazoa</taxon>
        <taxon>Chordata</taxon>
        <taxon>Craniata</taxon>
        <taxon>Vertebrata</taxon>
        <taxon>Euteleostomi</taxon>
        <taxon>Mammalia</taxon>
        <taxon>Eutheria</taxon>
        <taxon>Euarchontoglires</taxon>
        <taxon>Glires</taxon>
        <taxon>Rodentia</taxon>
        <taxon>Myomorpha</taxon>
        <taxon>Muroidea</taxon>
        <taxon>Muridae</taxon>
        <taxon>Murinae</taxon>
        <taxon>Mus</taxon>
        <taxon>Mus</taxon>
    </lineage>
</organism>
<keyword id="KW-0007">Acetylation</keyword>
<keyword id="KW-0106">Calcium</keyword>
<keyword id="KW-0903">Direct protein sequencing</keyword>
<keyword id="KW-0472">Membrane</keyword>
<keyword id="KW-0479">Metal-binding</keyword>
<keyword id="KW-0488">Methylation</keyword>
<keyword id="KW-0496">Mitochondrion</keyword>
<keyword id="KW-0999">Mitochondrion inner membrane</keyword>
<keyword id="KW-0597">Phosphoprotein</keyword>
<keyword id="KW-1185">Reference proteome</keyword>
<keyword id="KW-0677">Repeat</keyword>
<keyword id="KW-0812">Transmembrane</keyword>
<keyword id="KW-1133">Transmembrane helix</keyword>
<keyword id="KW-0813">Transport</keyword>
<comment type="function">
    <text evidence="1 3">Mitochondrial electrogenic aspartate/glutamate antiporter that favors efflux of aspartate and entry of glutamate and proton within the mitochondria as part of the malate-aspartate shuttle. Also mediates the uptake of L-cysteinesulfinate (3-sulfino-L-alanine) by mitochondria in exchange of L-glutamate and proton. Can also exchange L-cysteinesulfinate with aspartate in their anionic form without any proton translocation (By similarity). Lacks transport activity towards gamma-aminobutyric acid (GABA) (By similarity).</text>
</comment>
<comment type="catalytic activity">
    <reaction evidence="3">
        <text>L-aspartate(in) + L-glutamate(out) + H(+)(out) = L-aspartate(out) + L-glutamate(in) + H(+)(in)</text>
        <dbReference type="Rhea" id="RHEA:70783"/>
        <dbReference type="ChEBI" id="CHEBI:15378"/>
        <dbReference type="ChEBI" id="CHEBI:29985"/>
        <dbReference type="ChEBI" id="CHEBI:29991"/>
    </reaction>
</comment>
<comment type="catalytic activity">
    <reaction evidence="3">
        <text>3-sulfino-L-alanine(out) + L-glutamate(in) + H(+)(in) = 3-sulfino-L-alanine(in) + L-glutamate(out) + H(+)(out)</text>
        <dbReference type="Rhea" id="RHEA:70967"/>
        <dbReference type="ChEBI" id="CHEBI:15378"/>
        <dbReference type="ChEBI" id="CHEBI:29985"/>
        <dbReference type="ChEBI" id="CHEBI:61085"/>
    </reaction>
</comment>
<comment type="catalytic activity">
    <reaction evidence="1">
        <text>3-sulfino-L-alanine(out) + L-aspartate(in) = 3-sulfino-L-alanine(in) + L-aspartate(out)</text>
        <dbReference type="Rhea" id="RHEA:70975"/>
        <dbReference type="ChEBI" id="CHEBI:29991"/>
        <dbReference type="ChEBI" id="CHEBI:61085"/>
    </reaction>
</comment>
<comment type="subunit">
    <text evidence="3">Homodimer (via N-terminus).</text>
</comment>
<comment type="subcellular location">
    <subcellularLocation>
        <location evidence="3">Mitochondrion inner membrane</location>
        <topology evidence="3">Multi-pass membrane protein</topology>
    </subcellularLocation>
</comment>
<comment type="tissue specificity">
    <text evidence="6">At 10.5 dpc, expressed in branchial arches, a well as in the limb and tail buds. At 13.5 dpc expression is predominant in epithelial structures and the forebrain, kidney and liver. Expression in liver is maintained into adulthood.</text>
</comment>
<comment type="domain">
    <text evidence="2 3">The EF-hand 2 domain within the regulatory N-terminal domain binds one calcium in the mitochondrial intermembrane space. Calcium triggers the binding of the regulatory N-terminal domain to the C-terminal domain, opening a vestibule which allows the substrates to be translocated through the carrier domain (By similarity). In the absence of calcium, the linker loop domain may close the vestibule and prevent substrates from entering the carrier domain (By similarity).</text>
</comment>
<comment type="similarity">
    <text evidence="8">Belongs to the mitochondrial carrier (TC 2.A.29) family.</text>
</comment>
<reference key="1">
    <citation type="journal article" date="1999" name="Genomics">
        <title>Genomic structure of the adult-onset type II citrullinemia gene, SLC25A13, and cloning and expression of its mouse homologue.</title>
        <authorList>
            <person name="Sinasac D.S."/>
            <person name="Crackower M.A."/>
            <person name="Lee J.R."/>
            <person name="Kobayashi K."/>
            <person name="Saheki T."/>
            <person name="Scherer S.W."/>
            <person name="Tsui L.-C."/>
        </authorList>
    </citation>
    <scope>NUCLEOTIDE SEQUENCE [MRNA]</scope>
    <scope>TISSUE SPECIFICITY</scope>
</reference>
<reference key="2">
    <citation type="journal article" date="2005" name="Science">
        <title>The transcriptional landscape of the mammalian genome.</title>
        <authorList>
            <person name="Carninci P."/>
            <person name="Kasukawa T."/>
            <person name="Katayama S."/>
            <person name="Gough J."/>
            <person name="Frith M.C."/>
            <person name="Maeda N."/>
            <person name="Oyama R."/>
            <person name="Ravasi T."/>
            <person name="Lenhard B."/>
            <person name="Wells C."/>
            <person name="Kodzius R."/>
            <person name="Shimokawa K."/>
            <person name="Bajic V.B."/>
            <person name="Brenner S.E."/>
            <person name="Batalov S."/>
            <person name="Forrest A.R."/>
            <person name="Zavolan M."/>
            <person name="Davis M.J."/>
            <person name="Wilming L.G."/>
            <person name="Aidinis V."/>
            <person name="Allen J.E."/>
            <person name="Ambesi-Impiombato A."/>
            <person name="Apweiler R."/>
            <person name="Aturaliya R.N."/>
            <person name="Bailey T.L."/>
            <person name="Bansal M."/>
            <person name="Baxter L."/>
            <person name="Beisel K.W."/>
            <person name="Bersano T."/>
            <person name="Bono H."/>
            <person name="Chalk A.M."/>
            <person name="Chiu K.P."/>
            <person name="Choudhary V."/>
            <person name="Christoffels A."/>
            <person name="Clutterbuck D.R."/>
            <person name="Crowe M.L."/>
            <person name="Dalla E."/>
            <person name="Dalrymple B.P."/>
            <person name="de Bono B."/>
            <person name="Della Gatta G."/>
            <person name="di Bernardo D."/>
            <person name="Down T."/>
            <person name="Engstrom P."/>
            <person name="Fagiolini M."/>
            <person name="Faulkner G."/>
            <person name="Fletcher C.F."/>
            <person name="Fukushima T."/>
            <person name="Furuno M."/>
            <person name="Futaki S."/>
            <person name="Gariboldi M."/>
            <person name="Georgii-Hemming P."/>
            <person name="Gingeras T.R."/>
            <person name="Gojobori T."/>
            <person name="Green R.E."/>
            <person name="Gustincich S."/>
            <person name="Harbers M."/>
            <person name="Hayashi Y."/>
            <person name="Hensch T.K."/>
            <person name="Hirokawa N."/>
            <person name="Hill D."/>
            <person name="Huminiecki L."/>
            <person name="Iacono M."/>
            <person name="Ikeo K."/>
            <person name="Iwama A."/>
            <person name="Ishikawa T."/>
            <person name="Jakt M."/>
            <person name="Kanapin A."/>
            <person name="Katoh M."/>
            <person name="Kawasawa Y."/>
            <person name="Kelso J."/>
            <person name="Kitamura H."/>
            <person name="Kitano H."/>
            <person name="Kollias G."/>
            <person name="Krishnan S.P."/>
            <person name="Kruger A."/>
            <person name="Kummerfeld S.K."/>
            <person name="Kurochkin I.V."/>
            <person name="Lareau L.F."/>
            <person name="Lazarevic D."/>
            <person name="Lipovich L."/>
            <person name="Liu J."/>
            <person name="Liuni S."/>
            <person name="McWilliam S."/>
            <person name="Madan Babu M."/>
            <person name="Madera M."/>
            <person name="Marchionni L."/>
            <person name="Matsuda H."/>
            <person name="Matsuzawa S."/>
            <person name="Miki H."/>
            <person name="Mignone F."/>
            <person name="Miyake S."/>
            <person name="Morris K."/>
            <person name="Mottagui-Tabar S."/>
            <person name="Mulder N."/>
            <person name="Nakano N."/>
            <person name="Nakauchi H."/>
            <person name="Ng P."/>
            <person name="Nilsson R."/>
            <person name="Nishiguchi S."/>
            <person name="Nishikawa S."/>
            <person name="Nori F."/>
            <person name="Ohara O."/>
            <person name="Okazaki Y."/>
            <person name="Orlando V."/>
            <person name="Pang K.C."/>
            <person name="Pavan W.J."/>
            <person name="Pavesi G."/>
            <person name="Pesole G."/>
            <person name="Petrovsky N."/>
            <person name="Piazza S."/>
            <person name="Reed J."/>
            <person name="Reid J.F."/>
            <person name="Ring B.Z."/>
            <person name="Ringwald M."/>
            <person name="Rost B."/>
            <person name="Ruan Y."/>
            <person name="Salzberg S.L."/>
            <person name="Sandelin A."/>
            <person name="Schneider C."/>
            <person name="Schoenbach C."/>
            <person name="Sekiguchi K."/>
            <person name="Semple C.A."/>
            <person name="Seno S."/>
            <person name="Sessa L."/>
            <person name="Sheng Y."/>
            <person name="Shibata Y."/>
            <person name="Shimada H."/>
            <person name="Shimada K."/>
            <person name="Silva D."/>
            <person name="Sinclair B."/>
            <person name="Sperling S."/>
            <person name="Stupka E."/>
            <person name="Sugiura K."/>
            <person name="Sultana R."/>
            <person name="Takenaka Y."/>
            <person name="Taki K."/>
            <person name="Tammoja K."/>
            <person name="Tan S.L."/>
            <person name="Tang S."/>
            <person name="Taylor M.S."/>
            <person name="Tegner J."/>
            <person name="Teichmann S.A."/>
            <person name="Ueda H.R."/>
            <person name="van Nimwegen E."/>
            <person name="Verardo R."/>
            <person name="Wei C.L."/>
            <person name="Yagi K."/>
            <person name="Yamanishi H."/>
            <person name="Zabarovsky E."/>
            <person name="Zhu S."/>
            <person name="Zimmer A."/>
            <person name="Hide W."/>
            <person name="Bult C."/>
            <person name="Grimmond S.M."/>
            <person name="Teasdale R.D."/>
            <person name="Liu E.T."/>
            <person name="Brusic V."/>
            <person name="Quackenbush J."/>
            <person name="Wahlestedt C."/>
            <person name="Mattick J.S."/>
            <person name="Hume D.A."/>
            <person name="Kai C."/>
            <person name="Sasaki D."/>
            <person name="Tomaru Y."/>
            <person name="Fukuda S."/>
            <person name="Kanamori-Katayama M."/>
            <person name="Suzuki M."/>
            <person name="Aoki J."/>
            <person name="Arakawa T."/>
            <person name="Iida J."/>
            <person name="Imamura K."/>
            <person name="Itoh M."/>
            <person name="Kato T."/>
            <person name="Kawaji H."/>
            <person name="Kawagashira N."/>
            <person name="Kawashima T."/>
            <person name="Kojima M."/>
            <person name="Kondo S."/>
            <person name="Konno H."/>
            <person name="Nakano K."/>
            <person name="Ninomiya N."/>
            <person name="Nishio T."/>
            <person name="Okada M."/>
            <person name="Plessy C."/>
            <person name="Shibata K."/>
            <person name="Shiraki T."/>
            <person name="Suzuki S."/>
            <person name="Tagami M."/>
            <person name="Waki K."/>
            <person name="Watahiki A."/>
            <person name="Okamura-Oho Y."/>
            <person name="Suzuki H."/>
            <person name="Kawai J."/>
            <person name="Hayashizaki Y."/>
        </authorList>
    </citation>
    <scope>NUCLEOTIDE SEQUENCE [LARGE SCALE MRNA]</scope>
    <source>
        <strain>C57BL/6J</strain>
        <tissue>Embryo</tissue>
        <tissue>Kidney</tissue>
    </source>
</reference>
<reference key="3">
    <citation type="submission" date="2007-04" db="UniProtKB">
        <authorList>
            <person name="Lubec G."/>
            <person name="Kang S.U."/>
        </authorList>
    </citation>
    <scope>PROTEIN SEQUENCE OF 175-184; 385-406; 410-417 AND 457-468</scope>
    <scope>IDENTIFICATION BY MASS SPECTROMETRY</scope>
    <source>
        <strain>C57BL/6J</strain>
        <tissue>Brain</tissue>
    </source>
</reference>
<reference key="4">
    <citation type="journal article" date="2010" name="Cell">
        <title>A tissue-specific atlas of mouse protein phosphorylation and expression.</title>
        <authorList>
            <person name="Huttlin E.L."/>
            <person name="Jedrychowski M.P."/>
            <person name="Elias J.E."/>
            <person name="Goswami T."/>
            <person name="Rad R."/>
            <person name="Beausoleil S.A."/>
            <person name="Villen J."/>
            <person name="Haas W."/>
            <person name="Sowa M.E."/>
            <person name="Gygi S.P."/>
        </authorList>
    </citation>
    <scope>IDENTIFICATION BY MASS SPECTROMETRY [LARGE SCALE ANALYSIS]</scope>
    <source>
        <tissue>Heart</tissue>
        <tissue>Kidney</tissue>
        <tissue>Liver</tissue>
        <tissue>Lung</tissue>
        <tissue>Pancreas</tissue>
        <tissue>Spleen</tissue>
        <tissue>Testis</tissue>
    </source>
</reference>
<reference key="5">
    <citation type="journal article" date="2013" name="Mol. Cell">
        <title>SIRT5-mediated lysine desuccinylation impacts diverse metabolic pathways.</title>
        <authorList>
            <person name="Park J."/>
            <person name="Chen Y."/>
            <person name="Tishkoff D.X."/>
            <person name="Peng C."/>
            <person name="Tan M."/>
            <person name="Dai L."/>
            <person name="Xie Z."/>
            <person name="Zhang Y."/>
            <person name="Zwaans B.M."/>
            <person name="Skinner M.E."/>
            <person name="Lombard D.B."/>
            <person name="Zhao Y."/>
        </authorList>
    </citation>
    <scope>SUCCINYLATION [LARGE SCALE ANALYSIS] AT LYS-485 AND LYS-581</scope>
    <scope>IDENTIFICATION BY MASS SPECTROMETRY [LARGE SCALE ANALYSIS]</scope>
    <source>
        <tissue>Liver</tissue>
    </source>
</reference>
<reference key="6">
    <citation type="journal article" date="2013" name="Proc. Natl. Acad. Sci. U.S.A.">
        <title>Label-free quantitative proteomics of the lysine acetylome in mitochondria identifies substrates of SIRT3 in metabolic pathways.</title>
        <authorList>
            <person name="Rardin M.J."/>
            <person name="Newman J.C."/>
            <person name="Held J.M."/>
            <person name="Cusack M.P."/>
            <person name="Sorensen D.J."/>
            <person name="Li B."/>
            <person name="Schilling B."/>
            <person name="Mooney S.D."/>
            <person name="Kahn C.R."/>
            <person name="Verdin E."/>
            <person name="Gibson B.W."/>
        </authorList>
    </citation>
    <scope>ACETYLATION [LARGE SCALE ANALYSIS] AT LYS-18; LYS-354; LYS-373; LYS-485 AND LYS-663</scope>
    <scope>IDENTIFICATION BY MASS SPECTROMETRY [LARGE SCALE ANALYSIS]</scope>
    <source>
        <tissue>Liver</tissue>
    </source>
</reference>
<sequence>MAAAKVALTKRADPAELKAIFLKYASIEKNGEFFMSPHDFVTRYLNIFGESQPNPKTVELLSGVVDQTKDGLISFQEFVAFESVLCAPDALFMVAFQLFDKAGKGEVTFEDVKQIFGQTTIHQHIPFNWDSEFVQLHFGKERKRHLTYAEFTQFLLEIQLEHAKQAFVQRDNAKTGKVSAIDFRDIMVTIRPHVLTPFVEECLVAAAGGTRSHQVSFSYFNGFNSLLNNMELIRKIYSTLAGNRKDVEVTKEEFALAAQKFGQVTPMEVDILFQLADLYEPRGRMTLADIERIAPLEEGMLPFNLAEAQRQQKASGDAARPFLLQLAESAYRFGLGSIAGAVGATAVYPIDLVKTRMQNQRSTGSFVGELMYKNSFDCFKKVLRYEGFFGLYRGLLPQLLGVAPEKAIKLTVNDFVRDKFMHKDGSVPLLAEIFAGGCAGGSQVIFTNPLEIVKIRLQVAGEITTGPRVSALSVVRDLGFFGIYKGAKACFLRDIPFSAIYFPCYAHVKASFANEDGQVSPGSLLLAGAIAGMPAASLVTPADVIKTRLQVAARAGQTTYNGVTDCFRKILREEGPKALWKGVAARVFRSSPQFGVTLLTYELLQRWFYVDFGGVKPVGSEPVPKSRITLPAPNPDHVGGYKLAVATFAGIENKFGLYLPLFKPSASTSKVTAGDS</sequence>
<name>S2513_MOUSE</name>
<proteinExistence type="evidence at protein level"/>
<feature type="initiator methionine" description="Removed" evidence="3">
    <location>
        <position position="1"/>
    </location>
</feature>
<feature type="chain" id="PRO_0000090602" description="Electrogenic aspartate/glutamate antiporter SLC25A13, mitochondrial">
    <location>
        <begin position="2"/>
        <end position="676"/>
    </location>
</feature>
<feature type="topological domain" description="Mitochondrial intermembrane" evidence="8">
    <location>
        <begin position="2"/>
        <end position="332"/>
    </location>
</feature>
<feature type="transmembrane region" description="Helical; Name=1" evidence="2">
    <location>
        <begin position="333"/>
        <end position="350"/>
    </location>
</feature>
<feature type="topological domain" description="Mitochondrial matrix" evidence="8">
    <location>
        <begin position="351"/>
        <end position="393"/>
    </location>
</feature>
<feature type="transmembrane region" description="Helical; Name=2" evidence="2">
    <location>
        <begin position="394"/>
        <end position="413"/>
    </location>
</feature>
<feature type="topological domain" description="Mitochondrial intermembrane" evidence="8">
    <location>
        <begin position="414"/>
        <end position="436"/>
    </location>
</feature>
<feature type="transmembrane region" description="Helical; Name=3" evidence="2">
    <location>
        <begin position="437"/>
        <end position="450"/>
    </location>
</feature>
<feature type="topological domain" description="Mitochondrial matrix" evidence="8">
    <location>
        <begin position="451"/>
        <end position="485"/>
    </location>
</feature>
<feature type="transmembrane region" description="Helical; Name=4" evidence="2">
    <location>
        <begin position="486"/>
        <end position="505"/>
    </location>
</feature>
<feature type="topological domain" description="Mitochondrial intermembrane" evidence="8">
    <location>
        <begin position="506"/>
        <end position="524"/>
    </location>
</feature>
<feature type="transmembrane region" description="Helical; Name=5" evidence="2">
    <location>
        <begin position="525"/>
        <end position="542"/>
    </location>
</feature>
<feature type="topological domain" description="Mitochondrial matrix" evidence="8">
    <location>
        <begin position="543"/>
        <end position="581"/>
    </location>
</feature>
<feature type="transmembrane region" description="Helical; Name=6" evidence="2">
    <location>
        <begin position="582"/>
        <end position="601"/>
    </location>
</feature>
<feature type="topological domain" description="Mitochondrial intermembrane" evidence="8">
    <location>
        <begin position="602"/>
        <end position="676"/>
    </location>
</feature>
<feature type="domain" description="EF-hand 1" evidence="8">
    <location>
        <begin position="51"/>
        <end position="86"/>
    </location>
</feature>
<feature type="domain" description="EF-hand 2" evidence="5">
    <location>
        <begin position="87"/>
        <end position="122"/>
    </location>
</feature>
<feature type="domain" description="EF-hand 3" evidence="8">
    <location>
        <begin position="123"/>
        <end position="157"/>
    </location>
</feature>
<feature type="domain" description="EF-hand 4" evidence="5">
    <location>
        <begin position="158"/>
        <end position="193"/>
    </location>
</feature>
<feature type="repeat" description="Solcar 1" evidence="4">
    <location>
        <begin position="327"/>
        <end position="419"/>
    </location>
</feature>
<feature type="repeat" description="Solcar 2" evidence="4">
    <location>
        <begin position="427"/>
        <end position="511"/>
    </location>
</feature>
<feature type="repeat" description="Solcar 3" evidence="4">
    <location>
        <begin position="519"/>
        <end position="607"/>
    </location>
</feature>
<feature type="region of interest" description="Regulatory N-terminal domain" evidence="3">
    <location>
        <begin position="2"/>
        <end position="295"/>
    </location>
</feature>
<feature type="region of interest" description="Linker loop domain" evidence="2">
    <location>
        <begin position="296"/>
        <end position="311"/>
    </location>
</feature>
<feature type="region of interest" description="Carrier domain" evidence="3">
    <location>
        <begin position="322"/>
        <end position="613"/>
    </location>
</feature>
<feature type="region of interest" description="C-terminal domain" evidence="3">
    <location>
        <begin position="614"/>
        <end position="676"/>
    </location>
</feature>
<feature type="binding site" evidence="3">
    <location>
        <position position="66"/>
    </location>
    <ligand>
        <name>Ca(2+)</name>
        <dbReference type="ChEBI" id="CHEBI:29108"/>
    </ligand>
</feature>
<feature type="binding site" evidence="3">
    <location>
        <position position="68"/>
    </location>
    <ligand>
        <name>Ca(2+)</name>
        <dbReference type="ChEBI" id="CHEBI:29108"/>
    </ligand>
</feature>
<feature type="binding site" evidence="3">
    <location>
        <position position="70"/>
    </location>
    <ligand>
        <name>Ca(2+)</name>
        <dbReference type="ChEBI" id="CHEBI:29108"/>
    </ligand>
</feature>
<feature type="binding site" evidence="3">
    <location>
        <position position="72"/>
    </location>
    <ligand>
        <name>Ca(2+)</name>
        <dbReference type="ChEBI" id="CHEBI:29108"/>
    </ligand>
</feature>
<feature type="binding site" evidence="3">
    <location>
        <position position="77"/>
    </location>
    <ligand>
        <name>Ca(2+)</name>
        <dbReference type="ChEBI" id="CHEBI:29108"/>
    </ligand>
</feature>
<feature type="modified residue" description="N-acetylalanine" evidence="3">
    <location>
        <position position="2"/>
    </location>
</feature>
<feature type="modified residue" description="N6-acetyllysine" evidence="11">
    <location>
        <position position="18"/>
    </location>
</feature>
<feature type="modified residue" description="N6-acetyllysine" evidence="11">
    <location>
        <position position="354"/>
    </location>
</feature>
<feature type="modified residue" description="N6-acetyllysine" evidence="11">
    <location>
        <position position="373"/>
    </location>
</feature>
<feature type="modified residue" description="N6-methyllysine" evidence="3">
    <location>
        <position position="454"/>
    </location>
</feature>
<feature type="modified residue" description="N6-acetyllysine; alternate" evidence="11">
    <location>
        <position position="485"/>
    </location>
</feature>
<feature type="modified residue" description="N6-succinyllysine; alternate" evidence="12">
    <location>
        <position position="485"/>
    </location>
</feature>
<feature type="modified residue" description="N6-succinyllysine" evidence="12">
    <location>
        <position position="581"/>
    </location>
</feature>
<feature type="modified residue" description="N6-acetyllysine" evidence="11">
    <location>
        <position position="663"/>
    </location>
</feature>
<feature type="modified residue" description="Phosphoserine" evidence="3">
    <location>
        <position position="667"/>
    </location>
</feature>
<feature type="sequence conflict" description="In Ref. 2; BAB28397." evidence="8" ref="2">
    <location>
        <position position="312"/>
    </location>
</feature>
<feature type="sequence conflict" description="In Ref. 2; BAB22390." evidence="8" ref="2">
    <original>S</original>
    <variation>F</variation>
    <location>
        <position position="442"/>
    </location>
</feature>
<gene>
    <name evidence="9" type="primary">Slc25a13</name>
</gene>
<protein>
    <recommendedName>
        <fullName evidence="3">Electrogenic aspartate/glutamate antiporter SLC25A13, mitochondrial</fullName>
    </recommendedName>
    <alternativeName>
        <fullName evidence="7">Citrin</fullName>
    </alternativeName>
    <alternativeName>
        <fullName evidence="9">Solute carrier family 25 member 13</fullName>
    </alternativeName>
</protein>
<dbReference type="EMBL" id="AF164632">
    <property type="protein sequence ID" value="AAF21426.1"/>
    <property type="molecule type" value="mRNA"/>
</dbReference>
<dbReference type="EMBL" id="AK002829">
    <property type="protein sequence ID" value="BAB22390.1"/>
    <property type="molecule type" value="mRNA"/>
</dbReference>
<dbReference type="EMBL" id="AK012670">
    <property type="protein sequence ID" value="BAB28397.1"/>
    <property type="molecule type" value="mRNA"/>
</dbReference>
<dbReference type="CCDS" id="CCDS39421.1"/>
<dbReference type="RefSeq" id="NP_001171043.1">
    <property type="nucleotide sequence ID" value="NM_001177572.1"/>
</dbReference>
<dbReference type="RefSeq" id="NP_056644.1">
    <property type="nucleotide sequence ID" value="NM_015829.4"/>
</dbReference>
<dbReference type="SMR" id="Q9QXX4"/>
<dbReference type="BioGRID" id="206130">
    <property type="interactions" value="21"/>
</dbReference>
<dbReference type="FunCoup" id="Q9QXX4">
    <property type="interactions" value="1830"/>
</dbReference>
<dbReference type="IntAct" id="Q9QXX4">
    <property type="interactions" value="8"/>
</dbReference>
<dbReference type="MINT" id="Q9QXX4"/>
<dbReference type="STRING" id="10090.ENSMUSP00000139571"/>
<dbReference type="GlyGen" id="Q9QXX4">
    <property type="glycosylation" value="1 site, 1 O-linked glycan (1 site)"/>
</dbReference>
<dbReference type="iPTMnet" id="Q9QXX4"/>
<dbReference type="PhosphoSitePlus" id="Q9QXX4"/>
<dbReference type="SwissPalm" id="Q9QXX4"/>
<dbReference type="jPOST" id="Q9QXX4"/>
<dbReference type="PaxDb" id="10090-ENSMUSP00000015256"/>
<dbReference type="ProteomicsDB" id="283533"/>
<dbReference type="Pumba" id="Q9QXX4"/>
<dbReference type="Antibodypedia" id="15932">
    <property type="antibodies" value="221 antibodies from 31 providers"/>
</dbReference>
<dbReference type="DNASU" id="50799"/>
<dbReference type="Ensembl" id="ENSMUST00000015256.15">
    <property type="protein sequence ID" value="ENSMUSP00000015256.9"/>
    <property type="gene ID" value="ENSMUSG00000015112.16"/>
</dbReference>
<dbReference type="Ensembl" id="ENSMUST00000188414.4">
    <property type="protein sequence ID" value="ENSMUSP00000139571.2"/>
    <property type="gene ID" value="ENSMUSG00000015112.16"/>
</dbReference>
<dbReference type="GeneID" id="50799"/>
<dbReference type="KEGG" id="mmu:50799"/>
<dbReference type="UCSC" id="uc009awp.2">
    <property type="organism name" value="mouse"/>
</dbReference>
<dbReference type="AGR" id="MGI:1354721"/>
<dbReference type="CTD" id="10165"/>
<dbReference type="MGI" id="MGI:1354721">
    <property type="gene designation" value="Slc25a13"/>
</dbReference>
<dbReference type="VEuPathDB" id="HostDB:ENSMUSG00000015112"/>
<dbReference type="eggNOG" id="KOG0751">
    <property type="taxonomic scope" value="Eukaryota"/>
</dbReference>
<dbReference type="GeneTree" id="ENSGT00940000159344"/>
<dbReference type="HOGENOM" id="CLU_014931_3_0_1"/>
<dbReference type="InParanoid" id="Q9QXX4"/>
<dbReference type="OMA" id="AEAQRQX"/>
<dbReference type="OrthoDB" id="2161at2759"/>
<dbReference type="PhylomeDB" id="Q9QXX4"/>
<dbReference type="TreeFam" id="TF313209"/>
<dbReference type="Reactome" id="R-MMU-8963693">
    <property type="pathway name" value="Aspartate and asparagine metabolism"/>
</dbReference>
<dbReference type="Reactome" id="R-MMU-9856872">
    <property type="pathway name" value="Malate-aspartate shuttle"/>
</dbReference>
<dbReference type="BioGRID-ORCS" id="50799">
    <property type="hits" value="0 hits in 79 CRISPR screens"/>
</dbReference>
<dbReference type="CD-CODE" id="CE726F99">
    <property type="entry name" value="Postsynaptic density"/>
</dbReference>
<dbReference type="ChiTaRS" id="Slc25a13">
    <property type="organism name" value="mouse"/>
</dbReference>
<dbReference type="PRO" id="PR:Q9QXX4"/>
<dbReference type="Proteomes" id="UP000000589">
    <property type="component" value="Chromosome 6"/>
</dbReference>
<dbReference type="RNAct" id="Q9QXX4">
    <property type="molecule type" value="protein"/>
</dbReference>
<dbReference type="Bgee" id="ENSMUSG00000015112">
    <property type="expression patterns" value="Expressed in interventricular septum and 200 other cell types or tissues"/>
</dbReference>
<dbReference type="GO" id="GO:0005743">
    <property type="term" value="C:mitochondrial inner membrane"/>
    <property type="evidence" value="ECO:0000315"/>
    <property type="project" value="MGI"/>
</dbReference>
<dbReference type="GO" id="GO:0005739">
    <property type="term" value="C:mitochondrion"/>
    <property type="evidence" value="ECO:0000314"/>
    <property type="project" value="MGI"/>
</dbReference>
<dbReference type="GO" id="GO:0000514">
    <property type="term" value="F:3-sulfino-L-alanine: proton, glutamate antiporter activity"/>
    <property type="evidence" value="ECO:0000250"/>
    <property type="project" value="UniProtKB"/>
</dbReference>
<dbReference type="GO" id="GO:0015172">
    <property type="term" value="F:acidic amino acid transmembrane transporter activity"/>
    <property type="evidence" value="ECO:0000315"/>
    <property type="project" value="MGI"/>
</dbReference>
<dbReference type="GO" id="GO:0000515">
    <property type="term" value="F:aspartate:glutamate, proton antiporter activity"/>
    <property type="evidence" value="ECO:0000250"/>
    <property type="project" value="UniProtKB"/>
</dbReference>
<dbReference type="GO" id="GO:0005509">
    <property type="term" value="F:calcium ion binding"/>
    <property type="evidence" value="ECO:0000250"/>
    <property type="project" value="UniProtKB"/>
</dbReference>
<dbReference type="GO" id="GO:0042802">
    <property type="term" value="F:identical protein binding"/>
    <property type="evidence" value="ECO:0000250"/>
    <property type="project" value="UniProtKB"/>
</dbReference>
<dbReference type="GO" id="GO:0005313">
    <property type="term" value="F:L-glutamate transmembrane transporter activity"/>
    <property type="evidence" value="ECO:0000315"/>
    <property type="project" value="MGI"/>
</dbReference>
<dbReference type="GO" id="GO:0015810">
    <property type="term" value="P:aspartate transmembrane transport"/>
    <property type="evidence" value="ECO:0000315"/>
    <property type="project" value="MGI"/>
</dbReference>
<dbReference type="GO" id="GO:0006754">
    <property type="term" value="P:ATP biosynthetic process"/>
    <property type="evidence" value="ECO:0007669"/>
    <property type="project" value="Ensembl"/>
</dbReference>
<dbReference type="GO" id="GO:0045333">
    <property type="term" value="P:cellular respiration"/>
    <property type="evidence" value="ECO:0007669"/>
    <property type="project" value="Ensembl"/>
</dbReference>
<dbReference type="GO" id="GO:0006094">
    <property type="term" value="P:gluconeogenesis"/>
    <property type="evidence" value="ECO:0000315"/>
    <property type="project" value="MGI"/>
</dbReference>
<dbReference type="GO" id="GO:0015813">
    <property type="term" value="P:L-glutamate transmembrane transport"/>
    <property type="evidence" value="ECO:0000250"/>
    <property type="project" value="UniProtKB"/>
</dbReference>
<dbReference type="GO" id="GO:0043490">
    <property type="term" value="P:malate-aspartate shuttle"/>
    <property type="evidence" value="ECO:0000315"/>
    <property type="project" value="MGI"/>
</dbReference>
<dbReference type="GO" id="GO:0051592">
    <property type="term" value="P:response to calcium ion"/>
    <property type="evidence" value="ECO:0000250"/>
    <property type="project" value="UniProtKB"/>
</dbReference>
<dbReference type="FunFam" id="1.50.40.10:FF:000004">
    <property type="entry name" value="Calcium-binding mitochondrial carrier protein Aralar1"/>
    <property type="match status" value="1"/>
</dbReference>
<dbReference type="FunFam" id="1.10.238.10:FF:000064">
    <property type="entry name" value="calcium-binding mitochondrial carrier protein Aralar1 isoform X1"/>
    <property type="match status" value="1"/>
</dbReference>
<dbReference type="FunFam" id="1.10.238.10:FF:000529">
    <property type="entry name" value="Solute carrier family 25 member 13"/>
    <property type="match status" value="1"/>
</dbReference>
<dbReference type="Gene3D" id="1.10.238.10">
    <property type="entry name" value="EF-hand"/>
    <property type="match status" value="2"/>
</dbReference>
<dbReference type="Gene3D" id="1.50.40.10">
    <property type="entry name" value="Mitochondrial carrier domain"/>
    <property type="match status" value="1"/>
</dbReference>
<dbReference type="InterPro" id="IPR011992">
    <property type="entry name" value="EF-hand-dom_pair"/>
</dbReference>
<dbReference type="InterPro" id="IPR002048">
    <property type="entry name" value="EF_hand_dom"/>
</dbReference>
<dbReference type="InterPro" id="IPR002067">
    <property type="entry name" value="Mit_carrier"/>
</dbReference>
<dbReference type="InterPro" id="IPR051028">
    <property type="entry name" value="Mito_Solute_Carrier"/>
</dbReference>
<dbReference type="InterPro" id="IPR018108">
    <property type="entry name" value="Mitochondrial_sb/sol_carrier"/>
</dbReference>
<dbReference type="InterPro" id="IPR023395">
    <property type="entry name" value="Mt_carrier_dom_sf"/>
</dbReference>
<dbReference type="PANTHER" id="PTHR45678:SF12">
    <property type="entry name" value="ELECTROGENIC ASPARTATE_GLUTAMATE ANTIPORTER SLC25A13, MITOCHONDRIAL"/>
    <property type="match status" value="1"/>
</dbReference>
<dbReference type="PANTHER" id="PTHR45678">
    <property type="entry name" value="MITOCHONDRIAL 2-OXODICARBOXYLATE CARRIER 1-RELATED"/>
    <property type="match status" value="1"/>
</dbReference>
<dbReference type="Pfam" id="PF00153">
    <property type="entry name" value="Mito_carr"/>
    <property type="match status" value="3"/>
</dbReference>
<dbReference type="PRINTS" id="PR00926">
    <property type="entry name" value="MITOCARRIER"/>
</dbReference>
<dbReference type="SUPFAM" id="SSF47473">
    <property type="entry name" value="EF-hand"/>
    <property type="match status" value="2"/>
</dbReference>
<dbReference type="SUPFAM" id="SSF103506">
    <property type="entry name" value="Mitochondrial carrier"/>
    <property type="match status" value="1"/>
</dbReference>
<dbReference type="PROSITE" id="PS50222">
    <property type="entry name" value="EF_HAND_2"/>
    <property type="match status" value="3"/>
</dbReference>
<dbReference type="PROSITE" id="PS50920">
    <property type="entry name" value="SOLCAR"/>
    <property type="match status" value="3"/>
</dbReference>
<evidence type="ECO:0000250" key="1">
    <source>
        <dbReference type="UniProtKB" id="F1LZW6"/>
    </source>
</evidence>
<evidence type="ECO:0000250" key="2">
    <source>
        <dbReference type="UniProtKB" id="O75746"/>
    </source>
</evidence>
<evidence type="ECO:0000250" key="3">
    <source>
        <dbReference type="UniProtKB" id="Q9UJS0"/>
    </source>
</evidence>
<evidence type="ECO:0000255" key="4">
    <source>
        <dbReference type="PROSITE-ProRule" id="PRU00282"/>
    </source>
</evidence>
<evidence type="ECO:0000255" key="5">
    <source>
        <dbReference type="PROSITE-ProRule" id="PRU00448"/>
    </source>
</evidence>
<evidence type="ECO:0000269" key="6">
    <source>
    </source>
</evidence>
<evidence type="ECO:0000303" key="7">
    <source>
    </source>
</evidence>
<evidence type="ECO:0000305" key="8"/>
<evidence type="ECO:0000312" key="9">
    <source>
        <dbReference type="MGI" id="MGI:1354721"/>
    </source>
</evidence>
<evidence type="ECO:0000312" key="10">
    <source>
        <dbReference type="Proteomes" id="UP000000589"/>
    </source>
</evidence>
<evidence type="ECO:0007744" key="11">
    <source>
    </source>
</evidence>
<evidence type="ECO:0007744" key="12">
    <source>
    </source>
</evidence>